<reference key="1">
    <citation type="submission" date="2003-03" db="EMBL/GenBank/DDBJ databases">
        <title>The complete genome sequence of Neisseria gonorrhoeae.</title>
        <authorList>
            <person name="Lewis L.A."/>
            <person name="Gillaspy A.F."/>
            <person name="McLaughlin R.E."/>
            <person name="Gipson M."/>
            <person name="Ducey T.F."/>
            <person name="Ownbey T."/>
            <person name="Hartman K."/>
            <person name="Nydick C."/>
            <person name="Carson M.B."/>
            <person name="Vaughn J."/>
            <person name="Thomson C."/>
            <person name="Song L."/>
            <person name="Lin S."/>
            <person name="Yuan X."/>
            <person name="Najar F."/>
            <person name="Zhan M."/>
            <person name="Ren Q."/>
            <person name="Zhu H."/>
            <person name="Qi S."/>
            <person name="Kenton S.M."/>
            <person name="Lai H."/>
            <person name="White J.D."/>
            <person name="Clifton S."/>
            <person name="Roe B.A."/>
            <person name="Dyer D.W."/>
        </authorList>
    </citation>
    <scope>NUCLEOTIDE SEQUENCE [LARGE SCALE GENOMIC DNA]</scope>
    <source>
        <strain>ATCC 700825 / FA 1090</strain>
    </source>
</reference>
<sequence>MIYGIGTDIVSLKRIIRLNKKFGQAFAGRILTPEELLEFPQAGKPVNYLAKRFAAKEAFAKAVGTGIRGAVSFCNIGIGHDALGKPEFFYGPALSEWLEEQGISRVSLSMADEGDTVLAFAVAEK</sequence>
<proteinExistence type="inferred from homology"/>
<feature type="chain" id="PRO_0000228292" description="Holo-[acyl-carrier-protein] synthase">
    <location>
        <begin position="1"/>
        <end position="125"/>
    </location>
</feature>
<feature type="binding site" evidence="1">
    <location>
        <position position="8"/>
    </location>
    <ligand>
        <name>Mg(2+)</name>
        <dbReference type="ChEBI" id="CHEBI:18420"/>
    </ligand>
</feature>
<feature type="binding site" evidence="1">
    <location>
        <position position="57"/>
    </location>
    <ligand>
        <name>Mg(2+)</name>
        <dbReference type="ChEBI" id="CHEBI:18420"/>
    </ligand>
</feature>
<name>ACPS_NEIG1</name>
<accession>Q5F6P2</accession>
<dbReference type="EC" id="2.7.8.7" evidence="1"/>
<dbReference type="EMBL" id="AE004969">
    <property type="protein sequence ID" value="AAW90145.1"/>
    <property type="molecule type" value="Genomic_DNA"/>
</dbReference>
<dbReference type="RefSeq" id="WP_003695557.1">
    <property type="nucleotide sequence ID" value="NC_002946.2"/>
</dbReference>
<dbReference type="RefSeq" id="YP_208557.1">
    <property type="nucleotide sequence ID" value="NC_002946.2"/>
</dbReference>
<dbReference type="SMR" id="Q5F6P2"/>
<dbReference type="STRING" id="242231.NGO_1507"/>
<dbReference type="GeneID" id="66753707"/>
<dbReference type="KEGG" id="ngo:NGO_1507"/>
<dbReference type="PATRIC" id="fig|242231.10.peg.1792"/>
<dbReference type="HOGENOM" id="CLU_089696_3_1_4"/>
<dbReference type="Proteomes" id="UP000000535">
    <property type="component" value="Chromosome"/>
</dbReference>
<dbReference type="GO" id="GO:0005737">
    <property type="term" value="C:cytoplasm"/>
    <property type="evidence" value="ECO:0007669"/>
    <property type="project" value="UniProtKB-SubCell"/>
</dbReference>
<dbReference type="GO" id="GO:0008897">
    <property type="term" value="F:holo-[acyl-carrier-protein] synthase activity"/>
    <property type="evidence" value="ECO:0007669"/>
    <property type="project" value="UniProtKB-UniRule"/>
</dbReference>
<dbReference type="GO" id="GO:0000287">
    <property type="term" value="F:magnesium ion binding"/>
    <property type="evidence" value="ECO:0007669"/>
    <property type="project" value="UniProtKB-UniRule"/>
</dbReference>
<dbReference type="GO" id="GO:0006633">
    <property type="term" value="P:fatty acid biosynthetic process"/>
    <property type="evidence" value="ECO:0007669"/>
    <property type="project" value="UniProtKB-UniRule"/>
</dbReference>
<dbReference type="Gene3D" id="3.90.470.20">
    <property type="entry name" value="4'-phosphopantetheinyl transferase domain"/>
    <property type="match status" value="1"/>
</dbReference>
<dbReference type="HAMAP" id="MF_00101">
    <property type="entry name" value="AcpS"/>
    <property type="match status" value="1"/>
</dbReference>
<dbReference type="InterPro" id="IPR008278">
    <property type="entry name" value="4-PPantetheinyl_Trfase_dom"/>
</dbReference>
<dbReference type="InterPro" id="IPR037143">
    <property type="entry name" value="4-PPantetheinyl_Trfase_dom_sf"/>
</dbReference>
<dbReference type="InterPro" id="IPR002582">
    <property type="entry name" value="ACPS"/>
</dbReference>
<dbReference type="InterPro" id="IPR004568">
    <property type="entry name" value="Ppantetheine-prot_Trfase_dom"/>
</dbReference>
<dbReference type="NCBIfam" id="TIGR00516">
    <property type="entry name" value="acpS"/>
    <property type="match status" value="1"/>
</dbReference>
<dbReference type="NCBIfam" id="TIGR00556">
    <property type="entry name" value="pantethn_trn"/>
    <property type="match status" value="1"/>
</dbReference>
<dbReference type="Pfam" id="PF01648">
    <property type="entry name" value="ACPS"/>
    <property type="match status" value="1"/>
</dbReference>
<dbReference type="SUPFAM" id="SSF56214">
    <property type="entry name" value="4'-phosphopantetheinyl transferase"/>
    <property type="match status" value="1"/>
</dbReference>
<protein>
    <recommendedName>
        <fullName evidence="1">Holo-[acyl-carrier-protein] synthase</fullName>
        <shortName evidence="1">Holo-ACP synthase</shortName>
        <ecNumber evidence="1">2.7.8.7</ecNumber>
    </recommendedName>
    <alternativeName>
        <fullName evidence="1">4'-phosphopantetheinyl transferase AcpS</fullName>
    </alternativeName>
</protein>
<gene>
    <name evidence="1" type="primary">acpS</name>
    <name type="ordered locus">NGO_1507</name>
</gene>
<keyword id="KW-0963">Cytoplasm</keyword>
<keyword id="KW-0275">Fatty acid biosynthesis</keyword>
<keyword id="KW-0276">Fatty acid metabolism</keyword>
<keyword id="KW-0444">Lipid biosynthesis</keyword>
<keyword id="KW-0443">Lipid metabolism</keyword>
<keyword id="KW-0460">Magnesium</keyword>
<keyword id="KW-0479">Metal-binding</keyword>
<keyword id="KW-1185">Reference proteome</keyword>
<keyword id="KW-0808">Transferase</keyword>
<evidence type="ECO:0000255" key="1">
    <source>
        <dbReference type="HAMAP-Rule" id="MF_00101"/>
    </source>
</evidence>
<organism>
    <name type="scientific">Neisseria gonorrhoeae (strain ATCC 700825 / FA 1090)</name>
    <dbReference type="NCBI Taxonomy" id="242231"/>
    <lineage>
        <taxon>Bacteria</taxon>
        <taxon>Pseudomonadati</taxon>
        <taxon>Pseudomonadota</taxon>
        <taxon>Betaproteobacteria</taxon>
        <taxon>Neisseriales</taxon>
        <taxon>Neisseriaceae</taxon>
        <taxon>Neisseria</taxon>
    </lineage>
</organism>
<comment type="function">
    <text evidence="1">Transfers the 4'-phosphopantetheine moiety from coenzyme A to a Ser of acyl-carrier-protein.</text>
</comment>
<comment type="catalytic activity">
    <reaction evidence="1">
        <text>apo-[ACP] + CoA = holo-[ACP] + adenosine 3',5'-bisphosphate + H(+)</text>
        <dbReference type="Rhea" id="RHEA:12068"/>
        <dbReference type="Rhea" id="RHEA-COMP:9685"/>
        <dbReference type="Rhea" id="RHEA-COMP:9690"/>
        <dbReference type="ChEBI" id="CHEBI:15378"/>
        <dbReference type="ChEBI" id="CHEBI:29999"/>
        <dbReference type="ChEBI" id="CHEBI:57287"/>
        <dbReference type="ChEBI" id="CHEBI:58343"/>
        <dbReference type="ChEBI" id="CHEBI:64479"/>
        <dbReference type="EC" id="2.7.8.7"/>
    </reaction>
</comment>
<comment type="cofactor">
    <cofactor evidence="1">
        <name>Mg(2+)</name>
        <dbReference type="ChEBI" id="CHEBI:18420"/>
    </cofactor>
</comment>
<comment type="subcellular location">
    <subcellularLocation>
        <location evidence="1">Cytoplasm</location>
    </subcellularLocation>
</comment>
<comment type="similarity">
    <text evidence="1">Belongs to the P-Pant transferase superfamily. AcpS family.</text>
</comment>